<sequence>MALFSPPISSSSLQNPNFIPKFSFSLLSSNRFSLLSVTRASSDSGSTSPTAAVSVEAPEPVEVIVKEPPQSTPAVKKEETATAKNVAVEGEEMKTTESVVKFQDARWINGTWDLKQFEKDGKTDWDSVIVAEAKRRKWLEENPETTSNDEPVLFDTSIIPWWAWIKRYHLPEAELLNGRAAMIGFFMAYFVDSLTGVGLVDQMGNFFCKTLLFVAVAGVLFIRKNEDVDKLKNLFDETTLYDKQWQAAWKNDDDESLGSKKK</sequence>
<reference key="1">
    <citation type="journal article" date="1999" name="Trends Plant Sci.">
        <title>A guide to the Lhc genes and their relatives in Arabidopsis.</title>
        <authorList>
            <person name="Jansson S."/>
        </authorList>
    </citation>
    <scope>NUCLEOTIDE SEQUENCE [MRNA]</scope>
</reference>
<reference key="2">
    <citation type="journal article" date="1998" name="Nature">
        <title>Analysis of 1.9 Mb of contiguous sequence from chromosome 4 of Arabidopsis thaliana.</title>
        <authorList>
            <person name="Bevan M."/>
            <person name="Bancroft I."/>
            <person name="Bent E."/>
            <person name="Love K."/>
            <person name="Goodman H.M."/>
            <person name="Dean C."/>
            <person name="Bergkamp R."/>
            <person name="Dirkse W."/>
            <person name="van Staveren M."/>
            <person name="Stiekema W."/>
            <person name="Drost L."/>
            <person name="Ridley P."/>
            <person name="Hudson S.-A."/>
            <person name="Patel K."/>
            <person name="Murphy G."/>
            <person name="Piffanelli P."/>
            <person name="Wedler H."/>
            <person name="Wedler E."/>
            <person name="Wambutt R."/>
            <person name="Weitzenegger T."/>
            <person name="Pohl T."/>
            <person name="Terryn N."/>
            <person name="Gielen J."/>
            <person name="Villarroel R."/>
            <person name="De Clercq R."/>
            <person name="van Montagu M."/>
            <person name="Lecharny A."/>
            <person name="Aubourg S."/>
            <person name="Gy I."/>
            <person name="Kreis M."/>
            <person name="Lao N."/>
            <person name="Kavanagh T."/>
            <person name="Hempel S."/>
            <person name="Kotter P."/>
            <person name="Entian K.-D."/>
            <person name="Rieger M."/>
            <person name="Schaefer M."/>
            <person name="Funk B."/>
            <person name="Mueller-Auer S."/>
            <person name="Silvey M."/>
            <person name="James R."/>
            <person name="Monfort A."/>
            <person name="Pons A."/>
            <person name="Puigdomenech P."/>
            <person name="Douka A."/>
            <person name="Voukelatou E."/>
            <person name="Milioni D."/>
            <person name="Hatzopoulos P."/>
            <person name="Piravandi E."/>
            <person name="Obermaier B."/>
            <person name="Hilbert H."/>
            <person name="Duesterhoeft A."/>
            <person name="Moores T."/>
            <person name="Jones J.D.G."/>
            <person name="Eneva T."/>
            <person name="Palme K."/>
            <person name="Benes V."/>
            <person name="Rechmann S."/>
            <person name="Ansorge W."/>
            <person name="Cooke R."/>
            <person name="Berger C."/>
            <person name="Delseny M."/>
            <person name="Voet M."/>
            <person name="Volckaert G."/>
            <person name="Mewes H.-W."/>
            <person name="Klosterman S."/>
            <person name="Schueller C."/>
            <person name="Chalwatzis N."/>
        </authorList>
    </citation>
    <scope>NUCLEOTIDE SEQUENCE [LARGE SCALE GENOMIC DNA]</scope>
    <source>
        <strain>cv. Columbia</strain>
    </source>
</reference>
<reference key="3">
    <citation type="journal article" date="1999" name="Nature">
        <title>Sequence and analysis of chromosome 4 of the plant Arabidopsis thaliana.</title>
        <authorList>
            <person name="Mayer K.F.X."/>
            <person name="Schueller C."/>
            <person name="Wambutt R."/>
            <person name="Murphy G."/>
            <person name="Volckaert G."/>
            <person name="Pohl T."/>
            <person name="Duesterhoeft A."/>
            <person name="Stiekema W."/>
            <person name="Entian K.-D."/>
            <person name="Terryn N."/>
            <person name="Harris B."/>
            <person name="Ansorge W."/>
            <person name="Brandt P."/>
            <person name="Grivell L.A."/>
            <person name="Rieger M."/>
            <person name="Weichselgartner M."/>
            <person name="de Simone V."/>
            <person name="Obermaier B."/>
            <person name="Mache R."/>
            <person name="Mueller M."/>
            <person name="Kreis M."/>
            <person name="Delseny M."/>
            <person name="Puigdomenech P."/>
            <person name="Watson M."/>
            <person name="Schmidtheini T."/>
            <person name="Reichert B."/>
            <person name="Portetelle D."/>
            <person name="Perez-Alonso M."/>
            <person name="Boutry M."/>
            <person name="Bancroft I."/>
            <person name="Vos P."/>
            <person name="Hoheisel J."/>
            <person name="Zimmermann W."/>
            <person name="Wedler H."/>
            <person name="Ridley P."/>
            <person name="Langham S.-A."/>
            <person name="McCullagh B."/>
            <person name="Bilham L."/>
            <person name="Robben J."/>
            <person name="van der Schueren J."/>
            <person name="Grymonprez B."/>
            <person name="Chuang Y.-J."/>
            <person name="Vandenbussche F."/>
            <person name="Braeken M."/>
            <person name="Weltjens I."/>
            <person name="Voet M."/>
            <person name="Bastiaens I."/>
            <person name="Aert R."/>
            <person name="Defoor E."/>
            <person name="Weitzenegger T."/>
            <person name="Bothe G."/>
            <person name="Ramsperger U."/>
            <person name="Hilbert H."/>
            <person name="Braun M."/>
            <person name="Holzer E."/>
            <person name="Brandt A."/>
            <person name="Peters S."/>
            <person name="van Staveren M."/>
            <person name="Dirkse W."/>
            <person name="Mooijman P."/>
            <person name="Klein Lankhorst R."/>
            <person name="Rose M."/>
            <person name="Hauf J."/>
            <person name="Koetter P."/>
            <person name="Berneiser S."/>
            <person name="Hempel S."/>
            <person name="Feldpausch M."/>
            <person name="Lamberth S."/>
            <person name="Van den Daele H."/>
            <person name="De Keyser A."/>
            <person name="Buysshaert C."/>
            <person name="Gielen J."/>
            <person name="Villarroel R."/>
            <person name="De Clercq R."/>
            <person name="van Montagu M."/>
            <person name="Rogers J."/>
            <person name="Cronin A."/>
            <person name="Quail M.A."/>
            <person name="Bray-Allen S."/>
            <person name="Clark L."/>
            <person name="Doggett J."/>
            <person name="Hall S."/>
            <person name="Kay M."/>
            <person name="Lennard N."/>
            <person name="McLay K."/>
            <person name="Mayes R."/>
            <person name="Pettett A."/>
            <person name="Rajandream M.A."/>
            <person name="Lyne M."/>
            <person name="Benes V."/>
            <person name="Rechmann S."/>
            <person name="Borkova D."/>
            <person name="Bloecker H."/>
            <person name="Scharfe M."/>
            <person name="Grimm M."/>
            <person name="Loehnert T.-H."/>
            <person name="Dose S."/>
            <person name="de Haan M."/>
            <person name="Maarse A.C."/>
            <person name="Schaefer M."/>
            <person name="Mueller-Auer S."/>
            <person name="Gabel C."/>
            <person name="Fuchs M."/>
            <person name="Fartmann B."/>
            <person name="Granderath K."/>
            <person name="Dauner D."/>
            <person name="Herzl A."/>
            <person name="Neumann S."/>
            <person name="Argiriou A."/>
            <person name="Vitale D."/>
            <person name="Liguori R."/>
            <person name="Piravandi E."/>
            <person name="Massenet O."/>
            <person name="Quigley F."/>
            <person name="Clabauld G."/>
            <person name="Muendlein A."/>
            <person name="Felber R."/>
            <person name="Schnabl S."/>
            <person name="Hiller R."/>
            <person name="Schmidt W."/>
            <person name="Lecharny A."/>
            <person name="Aubourg S."/>
            <person name="Chefdor F."/>
            <person name="Cooke R."/>
            <person name="Berger C."/>
            <person name="Monfort A."/>
            <person name="Casacuberta E."/>
            <person name="Gibbons T."/>
            <person name="Weber N."/>
            <person name="Vandenbol M."/>
            <person name="Bargues M."/>
            <person name="Terol J."/>
            <person name="Torres A."/>
            <person name="Perez-Perez A."/>
            <person name="Purnelle B."/>
            <person name="Bent E."/>
            <person name="Johnson S."/>
            <person name="Tacon D."/>
            <person name="Jesse T."/>
            <person name="Heijnen L."/>
            <person name="Schwarz S."/>
            <person name="Scholler P."/>
            <person name="Heber S."/>
            <person name="Francs P."/>
            <person name="Bielke C."/>
            <person name="Frishman D."/>
            <person name="Haase D."/>
            <person name="Lemcke K."/>
            <person name="Mewes H.-W."/>
            <person name="Stocker S."/>
            <person name="Zaccaria P."/>
            <person name="Bevan M."/>
            <person name="Wilson R.K."/>
            <person name="de la Bastide M."/>
            <person name="Habermann K."/>
            <person name="Parnell L."/>
            <person name="Dedhia N."/>
            <person name="Gnoj L."/>
            <person name="Schutz K."/>
            <person name="Huang E."/>
            <person name="Spiegel L."/>
            <person name="Sekhon M."/>
            <person name="Murray J."/>
            <person name="Sheet P."/>
            <person name="Cordes M."/>
            <person name="Abu-Threideh J."/>
            <person name="Stoneking T."/>
            <person name="Kalicki J."/>
            <person name="Graves T."/>
            <person name="Harmon G."/>
            <person name="Edwards J."/>
            <person name="Latreille P."/>
            <person name="Courtney L."/>
            <person name="Cloud J."/>
            <person name="Abbott A."/>
            <person name="Scott K."/>
            <person name="Johnson D."/>
            <person name="Minx P."/>
            <person name="Bentley D."/>
            <person name="Fulton B."/>
            <person name="Miller N."/>
            <person name="Greco T."/>
            <person name="Kemp K."/>
            <person name="Kramer J."/>
            <person name="Fulton L."/>
            <person name="Mardis E."/>
            <person name="Dante M."/>
            <person name="Pepin K."/>
            <person name="Hillier L.W."/>
            <person name="Nelson J."/>
            <person name="Spieth J."/>
            <person name="Ryan E."/>
            <person name="Andrews S."/>
            <person name="Geisel C."/>
            <person name="Layman D."/>
            <person name="Du H."/>
            <person name="Ali J."/>
            <person name="Berghoff A."/>
            <person name="Jones K."/>
            <person name="Drone K."/>
            <person name="Cotton M."/>
            <person name="Joshu C."/>
            <person name="Antonoiu B."/>
            <person name="Zidanic M."/>
            <person name="Strong C."/>
            <person name="Sun H."/>
            <person name="Lamar B."/>
            <person name="Yordan C."/>
            <person name="Ma P."/>
            <person name="Zhong J."/>
            <person name="Preston R."/>
            <person name="Vil D."/>
            <person name="Shekher M."/>
            <person name="Matero A."/>
            <person name="Shah R."/>
            <person name="Swaby I.K."/>
            <person name="O'Shaughnessy A."/>
            <person name="Rodriguez M."/>
            <person name="Hoffman J."/>
            <person name="Till S."/>
            <person name="Granat S."/>
            <person name="Shohdy N."/>
            <person name="Hasegawa A."/>
            <person name="Hameed A."/>
            <person name="Lodhi M."/>
            <person name="Johnson A."/>
            <person name="Chen E."/>
            <person name="Marra M.A."/>
            <person name="Martienssen R."/>
            <person name="McCombie W.R."/>
        </authorList>
    </citation>
    <scope>NUCLEOTIDE SEQUENCE [LARGE SCALE GENOMIC DNA]</scope>
    <source>
        <strain>cv. Columbia</strain>
    </source>
</reference>
<reference key="4">
    <citation type="journal article" date="2017" name="Plant J.">
        <title>Araport11: a complete reannotation of the Arabidopsis thaliana reference genome.</title>
        <authorList>
            <person name="Cheng C.Y."/>
            <person name="Krishnakumar V."/>
            <person name="Chan A.P."/>
            <person name="Thibaud-Nissen F."/>
            <person name="Schobel S."/>
            <person name="Town C.D."/>
        </authorList>
    </citation>
    <scope>GENOME REANNOTATION</scope>
    <source>
        <strain>cv. Columbia</strain>
    </source>
</reference>
<reference key="5">
    <citation type="journal article" date="2003" name="Science">
        <title>Empirical analysis of transcriptional activity in the Arabidopsis genome.</title>
        <authorList>
            <person name="Yamada K."/>
            <person name="Lim J."/>
            <person name="Dale J.M."/>
            <person name="Chen H."/>
            <person name="Shinn P."/>
            <person name="Palm C.J."/>
            <person name="Southwick A.M."/>
            <person name="Wu H.C."/>
            <person name="Kim C.J."/>
            <person name="Nguyen M."/>
            <person name="Pham P.K."/>
            <person name="Cheuk R.F."/>
            <person name="Karlin-Newmann G."/>
            <person name="Liu S.X."/>
            <person name="Lam B."/>
            <person name="Sakano H."/>
            <person name="Wu T."/>
            <person name="Yu G."/>
            <person name="Miranda M."/>
            <person name="Quach H.L."/>
            <person name="Tripp M."/>
            <person name="Chang C.H."/>
            <person name="Lee J.M."/>
            <person name="Toriumi M.J."/>
            <person name="Chan M.M."/>
            <person name="Tang C.C."/>
            <person name="Onodera C.S."/>
            <person name="Deng J.M."/>
            <person name="Akiyama K."/>
            <person name="Ansari Y."/>
            <person name="Arakawa T."/>
            <person name="Banh J."/>
            <person name="Banno F."/>
            <person name="Bowser L."/>
            <person name="Brooks S.Y."/>
            <person name="Carninci P."/>
            <person name="Chao Q."/>
            <person name="Choy N."/>
            <person name="Enju A."/>
            <person name="Goldsmith A.D."/>
            <person name="Gurjal M."/>
            <person name="Hansen N.F."/>
            <person name="Hayashizaki Y."/>
            <person name="Johnson-Hopson C."/>
            <person name="Hsuan V.W."/>
            <person name="Iida K."/>
            <person name="Karnes M."/>
            <person name="Khan S."/>
            <person name="Koesema E."/>
            <person name="Ishida J."/>
            <person name="Jiang P.X."/>
            <person name="Jones T."/>
            <person name="Kawai J."/>
            <person name="Kamiya A."/>
            <person name="Meyers C."/>
            <person name="Nakajima M."/>
            <person name="Narusaka M."/>
            <person name="Seki M."/>
            <person name="Sakurai T."/>
            <person name="Satou M."/>
            <person name="Tamse R."/>
            <person name="Vaysberg M."/>
            <person name="Wallender E.K."/>
            <person name="Wong C."/>
            <person name="Yamamura Y."/>
            <person name="Yuan S."/>
            <person name="Shinozaki K."/>
            <person name="Davis R.W."/>
            <person name="Theologis A."/>
            <person name="Ecker J.R."/>
        </authorList>
    </citation>
    <scope>NUCLEOTIDE SEQUENCE [LARGE SCALE MRNA]</scope>
    <source>
        <strain>cv. Columbia</strain>
    </source>
</reference>
<reference key="6">
    <citation type="submission" date="2002-03" db="EMBL/GenBank/DDBJ databases">
        <title>Full-length cDNA from Arabidopsis thaliana.</title>
        <authorList>
            <person name="Brover V.V."/>
            <person name="Troukhan M.E."/>
            <person name="Alexandrov N.A."/>
            <person name="Lu Y.-P."/>
            <person name="Flavell R.B."/>
            <person name="Feldmann K.A."/>
        </authorList>
    </citation>
    <scope>NUCLEOTIDE SEQUENCE [LARGE SCALE MRNA]</scope>
</reference>
<reference key="7">
    <citation type="journal article" date="2010" name="Proc. Natl. Acad. Sci. U.S.A.">
        <title>LIL3, a light-harvesting-like protein, plays an essential role in chlorophyll and tocopherol biosynthesis.</title>
        <authorList>
            <person name="Tanaka R."/>
            <person name="Rothbart M."/>
            <person name="Oka S."/>
            <person name="Takabayashi A."/>
            <person name="Takahashi K."/>
            <person name="Shibata M."/>
            <person name="Myouga F."/>
            <person name="Motohashi R."/>
            <person name="Shinozaki K."/>
            <person name="Grimm B."/>
            <person name="Tanaka A."/>
        </authorList>
    </citation>
    <scope>INTERACTION WITH GGR</scope>
    <scope>DISRUPTION PHENOTYPE</scope>
</reference>
<reference key="8">
    <citation type="journal article" date="2014" name="J. Biol. Chem.">
        <title>Functional analysis of light-harvesting-like protein 3 (LIL3) and its light-harvesting chlorophyll-binding motif in Arabidopsis.</title>
        <authorList>
            <person name="Takahashi K."/>
            <person name="Takabayashi A."/>
            <person name="Tanaka A."/>
            <person name="Tanaka R."/>
        </authorList>
    </citation>
    <scope>FUNCTION</scope>
    <scope>INTERACTION WITH GGR</scope>
    <scope>SUBCELLULAR LOCATION</scope>
    <scope>MUTAGENESIS OF GLU-174; ASN-177 AND ASP-192</scope>
</reference>
<reference key="9">
    <citation type="journal article" date="2015" name="FEBS Lett.">
        <title>Lil3 dimerization and chlorophyll binding in Arabidopsis thaliana.</title>
        <authorList>
            <person name="Mork-Jansson A.E."/>
            <person name="Gargano D."/>
            <person name="Kmiec K."/>
            <person name="Furnes C."/>
            <person name="Shevela D."/>
            <person name="Eichacker L.A."/>
        </authorList>
    </citation>
    <scope>INTERACTION WITH LIL3.1 AND LIL3.2</scope>
    <scope>SUBCELLULAR LOCATION</scope>
</reference>
<reference key="10">
    <citation type="journal article" date="2015" name="Plant Cell Environ.">
        <title>Altered levels of LIL3 isoforms in Arabidopsis lead to disturbed pigment-protein assembly and chlorophyll synthesis, chlorotic phenotype and impaired photosynthetic performance.</title>
        <authorList>
            <person name="Lohscheider J.N."/>
            <person name="Rojas-Stuetz M.C."/>
            <person name="Rothbart M."/>
            <person name="Andersson U."/>
            <person name="Funck D."/>
            <person name="Mendgen K."/>
            <person name="Grimm B."/>
            <person name="Adamska I."/>
        </authorList>
    </citation>
    <scope>SUBCELLULAR LOCATION</scope>
    <scope>TISSUE SPECIFICITY</scope>
    <scope>INDUCTION</scope>
</reference>
<evidence type="ECO:0000250" key="1">
    <source>
        <dbReference type="UniProtKB" id="Q6NKS4"/>
    </source>
</evidence>
<evidence type="ECO:0000255" key="2"/>
<evidence type="ECO:0000269" key="3">
    <source>
    </source>
</evidence>
<evidence type="ECO:0000269" key="4">
    <source>
    </source>
</evidence>
<evidence type="ECO:0000269" key="5">
    <source>
    </source>
</evidence>
<evidence type="ECO:0000269" key="6">
    <source>
    </source>
</evidence>
<evidence type="ECO:0000305" key="7"/>
<evidence type="ECO:0000312" key="8">
    <source>
        <dbReference type="Araport" id="AT4G17600"/>
    </source>
</evidence>
<evidence type="ECO:0000312" key="9">
    <source>
        <dbReference type="EMBL" id="CAB10540.1"/>
    </source>
</evidence>
<feature type="transit peptide" description="Chloroplast" evidence="2">
    <location>
        <begin position="1"/>
        <end position="39"/>
    </location>
</feature>
<feature type="chain" id="PRO_0000437944" description="Light-harvesting complex-like protein 3 isotype 1, chloroplastic">
    <location>
        <begin position="40"/>
        <end position="262"/>
    </location>
</feature>
<feature type="transmembrane region" description="Helical" evidence="2">
    <location>
        <begin position="180"/>
        <end position="200"/>
    </location>
</feature>
<feature type="transmembrane region" description="Helical" evidence="2">
    <location>
        <begin position="202"/>
        <end position="222"/>
    </location>
</feature>
<feature type="mutagenesis site" description="Decreases interaction with GGR; when associated with A-177 and A-192." evidence="4">
    <original>E</original>
    <variation>A</variation>
    <location>
        <position position="174"/>
    </location>
</feature>
<feature type="mutagenesis site" description="Decreases interaction with GGR; when associated with A-174 and A-192." evidence="4">
    <original>N</original>
    <variation>A</variation>
    <location>
        <position position="177"/>
    </location>
</feature>
<feature type="mutagenesis site" description="Decreases interaction with GGR; when associated with A-174 and A-177." evidence="4">
    <original>D</original>
    <variation>A</variation>
    <location>
        <position position="192"/>
    </location>
</feature>
<feature type="sequence conflict" description="In Ref. 6; AAM63936." evidence="7" ref="6">
    <original>V</original>
    <variation>I</variation>
    <location>
        <position position="100"/>
    </location>
</feature>
<gene>
    <name type="primary">LIL3.1</name>
    <name evidence="8" type="ordered locus">At4g17600</name>
    <name evidence="9" type="ORF">dl4835w</name>
</gene>
<name>LIL31_ARATH</name>
<accession>Q9SYX1</accession>
<accession>O23601</accession>
<accession>Q8LC02</accession>
<keyword id="KW-0148">Chlorophyll</keyword>
<keyword id="KW-0150">Chloroplast</keyword>
<keyword id="KW-0157">Chromophore</keyword>
<keyword id="KW-0472">Membrane</keyword>
<keyword id="KW-0602">Photosynthesis</keyword>
<keyword id="KW-0604">Photosystem II</keyword>
<keyword id="KW-0934">Plastid</keyword>
<keyword id="KW-1185">Reference proteome</keyword>
<keyword id="KW-0793">Thylakoid</keyword>
<keyword id="KW-0809">Transit peptide</keyword>
<keyword id="KW-0812">Transmembrane</keyword>
<keyword id="KW-1133">Transmembrane helix</keyword>
<protein>
    <recommendedName>
        <fullName evidence="7">Light-harvesting complex-like protein 3 isotype 1, chloroplastic</fullName>
    </recommendedName>
    <alternativeName>
        <fullName evidence="7">LHC-like protein 3 isoform 1</fullName>
    </alternativeName>
</protein>
<proteinExistence type="evidence at protein level"/>
<dbReference type="EMBL" id="AF134133">
    <property type="protein sequence ID" value="AAD28780.1"/>
    <property type="molecule type" value="mRNA"/>
</dbReference>
<dbReference type="EMBL" id="Z97343">
    <property type="protein sequence ID" value="CAB10540.1"/>
    <property type="status" value="ALT_SEQ"/>
    <property type="molecule type" value="Genomic_DNA"/>
</dbReference>
<dbReference type="EMBL" id="AL161546">
    <property type="protein sequence ID" value="CAB78763.1"/>
    <property type="status" value="ALT_SEQ"/>
    <property type="molecule type" value="Genomic_DNA"/>
</dbReference>
<dbReference type="EMBL" id="CP002687">
    <property type="protein sequence ID" value="AEE83919.1"/>
    <property type="molecule type" value="Genomic_DNA"/>
</dbReference>
<dbReference type="EMBL" id="AF375427">
    <property type="protein sequence ID" value="AAK53011.1"/>
    <property type="molecule type" value="mRNA"/>
</dbReference>
<dbReference type="EMBL" id="AY074821">
    <property type="protein sequence ID" value="AAL69517.1"/>
    <property type="molecule type" value="mRNA"/>
</dbReference>
<dbReference type="EMBL" id="AY136323">
    <property type="protein sequence ID" value="AAM96989.1"/>
    <property type="molecule type" value="mRNA"/>
</dbReference>
<dbReference type="EMBL" id="BT000402">
    <property type="protein sequence ID" value="AAN15721.1"/>
    <property type="molecule type" value="mRNA"/>
</dbReference>
<dbReference type="EMBL" id="BT000425">
    <property type="protein sequence ID" value="AAN17402.1"/>
    <property type="molecule type" value="mRNA"/>
</dbReference>
<dbReference type="EMBL" id="BT002185">
    <property type="protein sequence ID" value="AAN72196.1"/>
    <property type="molecule type" value="mRNA"/>
</dbReference>
<dbReference type="EMBL" id="AY086891">
    <property type="protein sequence ID" value="AAM63936.1"/>
    <property type="molecule type" value="mRNA"/>
</dbReference>
<dbReference type="PIR" id="G71445">
    <property type="entry name" value="G71445"/>
</dbReference>
<dbReference type="PIR" id="T52310">
    <property type="entry name" value="T52310"/>
</dbReference>
<dbReference type="RefSeq" id="NP_567532.1">
    <property type="nucleotide sequence ID" value="NM_117868.6"/>
</dbReference>
<dbReference type="DIP" id="DIP-59382N"/>
<dbReference type="FunCoup" id="Q9SYX1">
    <property type="interactions" value="1721"/>
</dbReference>
<dbReference type="IntAct" id="Q9SYX1">
    <property type="interactions" value="2"/>
</dbReference>
<dbReference type="MINT" id="Q9SYX1"/>
<dbReference type="STRING" id="3702.Q9SYX1"/>
<dbReference type="GlyGen" id="Q9SYX1">
    <property type="glycosylation" value="1 site"/>
</dbReference>
<dbReference type="PaxDb" id="3702-AT4G17600.1"/>
<dbReference type="ProteomicsDB" id="238559"/>
<dbReference type="EnsemblPlants" id="AT4G17600.1">
    <property type="protein sequence ID" value="AT4G17600.1"/>
    <property type="gene ID" value="AT4G17600"/>
</dbReference>
<dbReference type="GeneID" id="827479"/>
<dbReference type="Gramene" id="AT4G17600.1">
    <property type="protein sequence ID" value="AT4G17600.1"/>
    <property type="gene ID" value="AT4G17600"/>
</dbReference>
<dbReference type="KEGG" id="ath:AT4G17600"/>
<dbReference type="Araport" id="AT4G17600"/>
<dbReference type="TAIR" id="AT4G17600">
    <property type="gene designation" value="LIL3:1"/>
</dbReference>
<dbReference type="eggNOG" id="ENOG502QTY8">
    <property type="taxonomic scope" value="Eukaryota"/>
</dbReference>
<dbReference type="HOGENOM" id="CLU_094768_0_0_1"/>
<dbReference type="InParanoid" id="Q9SYX1"/>
<dbReference type="OMA" id="QDARWIN"/>
<dbReference type="OrthoDB" id="566010at2759"/>
<dbReference type="PhylomeDB" id="Q9SYX1"/>
<dbReference type="PRO" id="PR:Q9SYX1"/>
<dbReference type="Proteomes" id="UP000006548">
    <property type="component" value="Chromosome 4"/>
</dbReference>
<dbReference type="ExpressionAtlas" id="Q9SYX1">
    <property type="expression patterns" value="baseline and differential"/>
</dbReference>
<dbReference type="GO" id="GO:0009507">
    <property type="term" value="C:chloroplast"/>
    <property type="evidence" value="ECO:0007005"/>
    <property type="project" value="TAIR"/>
</dbReference>
<dbReference type="GO" id="GO:0009535">
    <property type="term" value="C:chloroplast thylakoid membrane"/>
    <property type="evidence" value="ECO:0000314"/>
    <property type="project" value="TAIR"/>
</dbReference>
<dbReference type="GO" id="GO:0005829">
    <property type="term" value="C:cytosol"/>
    <property type="evidence" value="ECO:0007005"/>
    <property type="project" value="TAIR"/>
</dbReference>
<dbReference type="GO" id="GO:0009523">
    <property type="term" value="C:photosystem II"/>
    <property type="evidence" value="ECO:0007669"/>
    <property type="project" value="UniProtKB-KW"/>
</dbReference>
<dbReference type="GO" id="GO:0009503">
    <property type="term" value="C:thylakoid light-harvesting complex"/>
    <property type="evidence" value="ECO:0000314"/>
    <property type="project" value="TAIR"/>
</dbReference>
<dbReference type="GO" id="GO:0042651">
    <property type="term" value="C:thylakoid membrane"/>
    <property type="evidence" value="ECO:0000314"/>
    <property type="project" value="TAIR"/>
</dbReference>
<dbReference type="GO" id="GO:0016168">
    <property type="term" value="F:chlorophyll binding"/>
    <property type="evidence" value="ECO:0007669"/>
    <property type="project" value="UniProtKB-KW"/>
</dbReference>
<dbReference type="GO" id="GO:0003700">
    <property type="term" value="F:DNA-binding transcription factor activity"/>
    <property type="evidence" value="ECO:0000250"/>
    <property type="project" value="TAIR"/>
</dbReference>
<dbReference type="GO" id="GO:0019899">
    <property type="term" value="F:enzyme binding"/>
    <property type="evidence" value="ECO:0000353"/>
    <property type="project" value="TAIR"/>
</dbReference>
<dbReference type="GO" id="GO:0042802">
    <property type="term" value="F:identical protein binding"/>
    <property type="evidence" value="ECO:0000353"/>
    <property type="project" value="IntAct"/>
</dbReference>
<dbReference type="GO" id="GO:0043495">
    <property type="term" value="F:protein-membrane adaptor activity"/>
    <property type="evidence" value="ECO:0000314"/>
    <property type="project" value="TAIR"/>
</dbReference>
<dbReference type="GO" id="GO:0015979">
    <property type="term" value="P:photosynthesis"/>
    <property type="evidence" value="ECO:0007669"/>
    <property type="project" value="UniProtKB-KW"/>
</dbReference>
<dbReference type="GO" id="GO:1902326">
    <property type="term" value="P:positive regulation of chlorophyll biosynthetic process"/>
    <property type="evidence" value="ECO:0000316"/>
    <property type="project" value="TAIR"/>
</dbReference>
<dbReference type="GO" id="GO:1904964">
    <property type="term" value="P:positive regulation of phytol biosynthetic process"/>
    <property type="evidence" value="ECO:0000314"/>
    <property type="project" value="TAIR"/>
</dbReference>
<dbReference type="GO" id="GO:1904966">
    <property type="term" value="P:positive regulation of vitamin E biosynthetic process"/>
    <property type="evidence" value="ECO:0000316"/>
    <property type="project" value="TAIR"/>
</dbReference>
<dbReference type="GO" id="GO:0006355">
    <property type="term" value="P:regulation of DNA-templated transcription"/>
    <property type="evidence" value="ECO:0000304"/>
    <property type="project" value="TAIR"/>
</dbReference>
<dbReference type="Gene3D" id="1.10.3460.10">
    <property type="entry name" value="Chlorophyll a/b binding protein domain"/>
    <property type="match status" value="1"/>
</dbReference>
<dbReference type="PANTHER" id="PTHR14154">
    <property type="entry name" value="UPF0041 BRAIN PROTEIN 44-RELATED"/>
    <property type="match status" value="1"/>
</dbReference>
<dbReference type="SUPFAM" id="SSF103511">
    <property type="entry name" value="Chlorophyll a-b binding protein"/>
    <property type="match status" value="1"/>
</dbReference>
<organism>
    <name type="scientific">Arabidopsis thaliana</name>
    <name type="common">Mouse-ear cress</name>
    <dbReference type="NCBI Taxonomy" id="3702"/>
    <lineage>
        <taxon>Eukaryota</taxon>
        <taxon>Viridiplantae</taxon>
        <taxon>Streptophyta</taxon>
        <taxon>Embryophyta</taxon>
        <taxon>Tracheophyta</taxon>
        <taxon>Spermatophyta</taxon>
        <taxon>Magnoliopsida</taxon>
        <taxon>eudicotyledons</taxon>
        <taxon>Gunneridae</taxon>
        <taxon>Pentapetalae</taxon>
        <taxon>rosids</taxon>
        <taxon>malvids</taxon>
        <taxon>Brassicales</taxon>
        <taxon>Brassicaceae</taxon>
        <taxon>Camelineae</taxon>
        <taxon>Arabidopsis</taxon>
    </lineage>
</organism>
<comment type="function">
    <text evidence="1 3 4 5">Light-harvesting-like protein required for biosynthesis of phytylated chlorophylls and alpha-tocopherol in green seedlings. Functions by anchoring geranylgeranyl reductase (GGR) in the thylakoid membrane, leading to the stabilization of GGR activity (PubMed:20823244, PubMed:24275650). Binds chlorophyll a in the thylakoid membrane (By similarity). Plays a role in the regulation of chlorophyll biosynthesis under light stress and under standard growth conditions (PubMed:25808681).</text>
</comment>
<comment type="subunit">
    <text evidence="3 4 6">Interacts with GGR (PubMed:20823244, PubMed:24275650). Forms homodimer, and heterodimer with LIL3.2 (PubMed:26320415).</text>
</comment>
<comment type="interaction">
    <interactant intactId="EBI-11361535">
        <id>Q9SYX1</id>
    </interactant>
    <interactant intactId="EBI-2298544">
        <id>Q9CA67</id>
        <label>CHLP</label>
    </interactant>
    <organismsDiffer>false</organismsDiffer>
    <experiments>2</experiments>
</comment>
<comment type="interaction">
    <interactant intactId="EBI-11361535">
        <id>Q9SYX1</id>
    </interactant>
    <interactant intactId="EBI-11361535">
        <id>Q9SYX1</id>
        <label>LIL3.1</label>
    </interactant>
    <organismsDiffer>false</organismsDiffer>
    <experiments>2</experiments>
</comment>
<comment type="interaction">
    <interactant intactId="EBI-11361535">
        <id>Q9SYX1</id>
    </interactant>
    <interactant intactId="EBI-11361548">
        <id>Q6NKS4</id>
        <label>LIL3.2</label>
    </interactant>
    <organismsDiffer>false</organismsDiffer>
    <experiments>3</experiments>
</comment>
<comment type="subcellular location">
    <subcellularLocation>
        <location evidence="4 5 6">Plastid</location>
        <location evidence="4 5 6">Chloroplast thylakoid membrane</location>
        <topology evidence="2">Multi-pass membrane protein</topology>
    </subcellularLocation>
    <text evidence="5">Associates with subcomplexes of LHC antenna of photosystem II.</text>
</comment>
<comment type="tissue specificity">
    <text evidence="5">Expressed in photosynthetically active tissues (at protein level).</text>
</comment>
<comment type="induction">
    <text evidence="5">Induced by light.</text>
</comment>
<comment type="disruption phenotype">
    <text evidence="3">No visible phenotype under normal growth conditions, but the double mutant plants lli3:1 and lli3:2 are dwarf with yellowish green leaves.</text>
</comment>
<comment type="sequence caution" evidence="7">
    <conflict type="erroneous gene model prediction">
        <sequence resource="EMBL-CDS" id="CAB10540"/>
    </conflict>
</comment>
<comment type="sequence caution" evidence="7">
    <conflict type="erroneous gene model prediction">
        <sequence resource="EMBL-CDS" id="CAB78763"/>
    </conflict>
</comment>